<gene>
    <name evidence="1" type="primary">cysA</name>
    <name type="ordered locus">b2422</name>
    <name type="ordered locus">JW2415</name>
</gene>
<accession>P16676</accession>
<accession>P77693</accession>
<dbReference type="EC" id="7.3.2.3" evidence="1"/>
<dbReference type="EMBL" id="M32101">
    <property type="protein sequence ID" value="AAA23639.1"/>
    <property type="molecule type" value="Genomic_DNA"/>
</dbReference>
<dbReference type="EMBL" id="U00096">
    <property type="protein sequence ID" value="AAC75475.1"/>
    <property type="molecule type" value="Genomic_DNA"/>
</dbReference>
<dbReference type="EMBL" id="AP009048">
    <property type="protein sequence ID" value="BAA16296.1"/>
    <property type="molecule type" value="Genomic_DNA"/>
</dbReference>
<dbReference type="PIR" id="E65016">
    <property type="entry name" value="QRECSA"/>
</dbReference>
<dbReference type="RefSeq" id="NP_416917.1">
    <property type="nucleotide sequence ID" value="NC_000913.3"/>
</dbReference>
<dbReference type="RefSeq" id="WP_000021036.1">
    <property type="nucleotide sequence ID" value="NZ_SSZK01000005.1"/>
</dbReference>
<dbReference type="SMR" id="P16676"/>
<dbReference type="BioGRID" id="4260755">
    <property type="interactions" value="39"/>
</dbReference>
<dbReference type="BioGRID" id="851229">
    <property type="interactions" value="1"/>
</dbReference>
<dbReference type="ComplexPortal" id="CPX-4385">
    <property type="entry name" value="Sulfate/thiosulfate ABC transporter complex, cypP variant"/>
</dbReference>
<dbReference type="ComplexPortal" id="CPX-4386">
    <property type="entry name" value="Sulfate/thiosulfate ABC transporter complex, sbp variant"/>
</dbReference>
<dbReference type="DIP" id="DIP-9373N"/>
<dbReference type="FunCoup" id="P16676">
    <property type="interactions" value="399"/>
</dbReference>
<dbReference type="IntAct" id="P16676">
    <property type="interactions" value="4"/>
</dbReference>
<dbReference type="STRING" id="511145.b2422"/>
<dbReference type="TCDB" id="3.A.1.6.1">
    <property type="family name" value="the atp-binding cassette (abc) superfamily"/>
</dbReference>
<dbReference type="jPOST" id="P16676"/>
<dbReference type="PaxDb" id="511145-b2422"/>
<dbReference type="EnsemblBacteria" id="AAC75475">
    <property type="protein sequence ID" value="AAC75475"/>
    <property type="gene ID" value="b2422"/>
</dbReference>
<dbReference type="GeneID" id="75172536"/>
<dbReference type="GeneID" id="946889"/>
<dbReference type="KEGG" id="ecj:JW2415"/>
<dbReference type="KEGG" id="eco:b2422"/>
<dbReference type="KEGG" id="ecoc:C3026_13460"/>
<dbReference type="PATRIC" id="fig|1411691.4.peg.4309"/>
<dbReference type="EchoBASE" id="EB0180"/>
<dbReference type="eggNOG" id="COG1118">
    <property type="taxonomic scope" value="Bacteria"/>
</dbReference>
<dbReference type="HOGENOM" id="CLU_000604_1_1_6"/>
<dbReference type="InParanoid" id="P16676"/>
<dbReference type="OMA" id="AAFKHMT"/>
<dbReference type="OrthoDB" id="9802264at2"/>
<dbReference type="PhylomeDB" id="P16676"/>
<dbReference type="BioCyc" id="EcoCyc:CYSA-MONOMER"/>
<dbReference type="BioCyc" id="MetaCyc:CYSA-MONOMER"/>
<dbReference type="PRO" id="PR:P16676"/>
<dbReference type="Proteomes" id="UP000000625">
    <property type="component" value="Chromosome"/>
</dbReference>
<dbReference type="GO" id="GO:0035796">
    <property type="term" value="C:ATP-binding cassette (ABC) transporter complex, transmembrane substrate-binding subunit-containing"/>
    <property type="evidence" value="ECO:0000303"/>
    <property type="project" value="ComplexPortal"/>
</dbReference>
<dbReference type="GO" id="GO:0016020">
    <property type="term" value="C:membrane"/>
    <property type="evidence" value="ECO:0000303"/>
    <property type="project" value="ComplexPortal"/>
</dbReference>
<dbReference type="GO" id="GO:0015419">
    <property type="term" value="F:ABC-type sulfate transporter activity"/>
    <property type="evidence" value="ECO:0007669"/>
    <property type="project" value="InterPro"/>
</dbReference>
<dbReference type="GO" id="GO:0102025">
    <property type="term" value="F:ABC-type thiosulfate transporter activity"/>
    <property type="evidence" value="ECO:0007669"/>
    <property type="project" value="RHEA"/>
</dbReference>
<dbReference type="GO" id="GO:0005524">
    <property type="term" value="F:ATP binding"/>
    <property type="evidence" value="ECO:0000255"/>
    <property type="project" value="EcoCyc"/>
</dbReference>
<dbReference type="GO" id="GO:0016887">
    <property type="term" value="F:ATP hydrolysis activity"/>
    <property type="evidence" value="ECO:0007669"/>
    <property type="project" value="InterPro"/>
</dbReference>
<dbReference type="GO" id="GO:1902358">
    <property type="term" value="P:sulfate transmembrane transport"/>
    <property type="evidence" value="ECO:0000318"/>
    <property type="project" value="GO_Central"/>
</dbReference>
<dbReference type="GO" id="GO:0015709">
    <property type="term" value="P:thiosulfate transport"/>
    <property type="evidence" value="ECO:0000303"/>
    <property type="project" value="ComplexPortal"/>
</dbReference>
<dbReference type="CDD" id="cd03296">
    <property type="entry name" value="ABC_CysA_sulfate_importer"/>
    <property type="match status" value="1"/>
</dbReference>
<dbReference type="FunFam" id="3.40.50.300:FF:000227">
    <property type="entry name" value="Sulfate/thiosulfate import ATP-binding protein CysA"/>
    <property type="match status" value="1"/>
</dbReference>
<dbReference type="Gene3D" id="3.40.50.300">
    <property type="entry name" value="P-loop containing nucleotide triphosphate hydrolases"/>
    <property type="match status" value="1"/>
</dbReference>
<dbReference type="InterPro" id="IPR003593">
    <property type="entry name" value="AAA+_ATPase"/>
</dbReference>
<dbReference type="InterPro" id="IPR050093">
    <property type="entry name" value="ABC_SmlMolc_Importer"/>
</dbReference>
<dbReference type="InterPro" id="IPR003439">
    <property type="entry name" value="ABC_transporter-like_ATP-bd"/>
</dbReference>
<dbReference type="InterPro" id="IPR017871">
    <property type="entry name" value="ABC_transporter-like_CS"/>
</dbReference>
<dbReference type="InterPro" id="IPR008995">
    <property type="entry name" value="Mo/tungstate-bd_C_term_dom"/>
</dbReference>
<dbReference type="InterPro" id="IPR027417">
    <property type="entry name" value="P-loop_NTPase"/>
</dbReference>
<dbReference type="InterPro" id="IPR005666">
    <property type="entry name" value="Sulph_transpt1"/>
</dbReference>
<dbReference type="NCBIfam" id="TIGR00968">
    <property type="entry name" value="3a0106s01"/>
    <property type="match status" value="1"/>
</dbReference>
<dbReference type="NCBIfam" id="NF008105">
    <property type="entry name" value="PRK10851.1"/>
    <property type="match status" value="1"/>
</dbReference>
<dbReference type="PANTHER" id="PTHR42781">
    <property type="entry name" value="SPERMIDINE/PUTRESCINE IMPORT ATP-BINDING PROTEIN POTA"/>
    <property type="match status" value="1"/>
</dbReference>
<dbReference type="PANTHER" id="PTHR42781:SF4">
    <property type="entry name" value="SPERMIDINE_PUTRESCINE IMPORT ATP-BINDING PROTEIN POTA"/>
    <property type="match status" value="1"/>
</dbReference>
<dbReference type="Pfam" id="PF00005">
    <property type="entry name" value="ABC_tran"/>
    <property type="match status" value="1"/>
</dbReference>
<dbReference type="SMART" id="SM00382">
    <property type="entry name" value="AAA"/>
    <property type="match status" value="1"/>
</dbReference>
<dbReference type="SUPFAM" id="SSF50331">
    <property type="entry name" value="MOP-like"/>
    <property type="match status" value="1"/>
</dbReference>
<dbReference type="SUPFAM" id="SSF52540">
    <property type="entry name" value="P-loop containing nucleoside triphosphate hydrolases"/>
    <property type="match status" value="1"/>
</dbReference>
<dbReference type="PROSITE" id="PS00211">
    <property type="entry name" value="ABC_TRANSPORTER_1"/>
    <property type="match status" value="1"/>
</dbReference>
<dbReference type="PROSITE" id="PS50893">
    <property type="entry name" value="ABC_TRANSPORTER_2"/>
    <property type="match status" value="1"/>
</dbReference>
<dbReference type="PROSITE" id="PS51237">
    <property type="entry name" value="CYSA"/>
    <property type="match status" value="1"/>
</dbReference>
<keyword id="KW-0067">ATP-binding</keyword>
<keyword id="KW-0997">Cell inner membrane</keyword>
<keyword id="KW-1003">Cell membrane</keyword>
<keyword id="KW-0472">Membrane</keyword>
<keyword id="KW-0547">Nucleotide-binding</keyword>
<keyword id="KW-1185">Reference proteome</keyword>
<keyword id="KW-0764">Sulfate transport</keyword>
<keyword id="KW-1278">Translocase</keyword>
<keyword id="KW-0813">Transport</keyword>
<feature type="chain" id="PRO_0000092265" description="Sulfate/thiosulfate import ATP-binding protein CysA">
    <location>
        <begin position="1"/>
        <end position="365"/>
    </location>
</feature>
<feature type="domain" description="ABC transporter" evidence="1">
    <location>
        <begin position="3"/>
        <end position="237"/>
    </location>
</feature>
<feature type="binding site" evidence="1">
    <location>
        <begin position="35"/>
        <end position="42"/>
    </location>
    <ligand>
        <name>ATP</name>
        <dbReference type="ChEBI" id="CHEBI:30616"/>
    </ligand>
</feature>
<feature type="sequence conflict" description="In Ref. 1; AAA23639." evidence="2" ref="1">
    <original>QL</original>
    <variation>HV</variation>
    <location>
        <begin position="136"/>
        <end position="137"/>
    </location>
</feature>
<reference key="1">
    <citation type="journal article" date="1990" name="J. Bacteriol.">
        <title>Sulfate and thiosulfate transport in Escherichia coli K-12: nucleotide sequence and expression of the cysTWAM gene cluster.</title>
        <authorList>
            <person name="Sirko A."/>
            <person name="Hryniewicz M.M."/>
            <person name="Hulanicka D.M."/>
            <person name="Boeck A."/>
        </authorList>
    </citation>
    <scope>NUCLEOTIDE SEQUENCE [GENOMIC DNA]</scope>
    <source>
        <strain>K12</strain>
    </source>
</reference>
<reference key="2">
    <citation type="journal article" date="1997" name="DNA Res.">
        <title>Construction of a contiguous 874-kb sequence of the Escherichia coli-K12 genome corresponding to 50.0-68.8 min on the linkage map and analysis of its sequence features.</title>
        <authorList>
            <person name="Yamamoto Y."/>
            <person name="Aiba H."/>
            <person name="Baba T."/>
            <person name="Hayashi K."/>
            <person name="Inada T."/>
            <person name="Isono K."/>
            <person name="Itoh T."/>
            <person name="Kimura S."/>
            <person name="Kitagawa M."/>
            <person name="Makino K."/>
            <person name="Miki T."/>
            <person name="Mitsuhashi N."/>
            <person name="Mizobuchi K."/>
            <person name="Mori H."/>
            <person name="Nakade S."/>
            <person name="Nakamura Y."/>
            <person name="Nashimoto H."/>
            <person name="Oshima T."/>
            <person name="Oyama S."/>
            <person name="Saito N."/>
            <person name="Sampei G."/>
            <person name="Satoh Y."/>
            <person name="Sivasundaram S."/>
            <person name="Tagami H."/>
            <person name="Takahashi H."/>
            <person name="Takeda J."/>
            <person name="Takemoto K."/>
            <person name="Uehara K."/>
            <person name="Wada C."/>
            <person name="Yamagata S."/>
            <person name="Horiuchi T."/>
        </authorList>
    </citation>
    <scope>NUCLEOTIDE SEQUENCE [LARGE SCALE GENOMIC DNA]</scope>
    <source>
        <strain>K12 / W3110 / ATCC 27325 / DSM 5911</strain>
    </source>
</reference>
<reference key="3">
    <citation type="journal article" date="1997" name="Science">
        <title>The complete genome sequence of Escherichia coli K-12.</title>
        <authorList>
            <person name="Blattner F.R."/>
            <person name="Plunkett G. III"/>
            <person name="Bloch C.A."/>
            <person name="Perna N.T."/>
            <person name="Burland V."/>
            <person name="Riley M."/>
            <person name="Collado-Vides J."/>
            <person name="Glasner J.D."/>
            <person name="Rode C.K."/>
            <person name="Mayhew G.F."/>
            <person name="Gregor J."/>
            <person name="Davis N.W."/>
            <person name="Kirkpatrick H.A."/>
            <person name="Goeden M.A."/>
            <person name="Rose D.J."/>
            <person name="Mau B."/>
            <person name="Shao Y."/>
        </authorList>
    </citation>
    <scope>NUCLEOTIDE SEQUENCE [LARGE SCALE GENOMIC DNA]</scope>
    <source>
        <strain>K12 / MG1655 / ATCC 47076</strain>
    </source>
</reference>
<reference key="4">
    <citation type="journal article" date="2006" name="Mol. Syst. Biol.">
        <title>Highly accurate genome sequences of Escherichia coli K-12 strains MG1655 and W3110.</title>
        <authorList>
            <person name="Hayashi K."/>
            <person name="Morooka N."/>
            <person name="Yamamoto Y."/>
            <person name="Fujita K."/>
            <person name="Isono K."/>
            <person name="Choi S."/>
            <person name="Ohtsubo E."/>
            <person name="Baba T."/>
            <person name="Wanner B.L."/>
            <person name="Mori H."/>
            <person name="Horiuchi T."/>
        </authorList>
    </citation>
    <scope>NUCLEOTIDE SEQUENCE [LARGE SCALE GENOMIC DNA]</scope>
    <source>
        <strain>K12 / W3110 / ATCC 27325 / DSM 5911</strain>
    </source>
</reference>
<reference key="5">
    <citation type="journal article" date="1995" name="J. Bacteriol.">
        <title>Molybdate and regulation of mod (molybdate transport), fdhF, and hyc (formate hydrogenlyase) operons in Escherichia coli.</title>
        <authorList>
            <person name="Rosentel J.K."/>
            <person name="Healy F."/>
            <person name="Maupin-Furlow J.A."/>
            <person name="Lee J.H."/>
            <person name="Shanmugam K.T."/>
        </authorList>
    </citation>
    <scope>ALTERNATIVE MOLYBDATE TRANSPORT</scope>
</reference>
<evidence type="ECO:0000255" key="1">
    <source>
        <dbReference type="HAMAP-Rule" id="MF_01701"/>
    </source>
</evidence>
<evidence type="ECO:0000305" key="2"/>
<proteinExistence type="evidence at protein level"/>
<organism>
    <name type="scientific">Escherichia coli (strain K12)</name>
    <dbReference type="NCBI Taxonomy" id="83333"/>
    <lineage>
        <taxon>Bacteria</taxon>
        <taxon>Pseudomonadati</taxon>
        <taxon>Pseudomonadota</taxon>
        <taxon>Gammaproteobacteria</taxon>
        <taxon>Enterobacterales</taxon>
        <taxon>Enterobacteriaceae</taxon>
        <taxon>Escherichia</taxon>
    </lineage>
</organism>
<protein>
    <recommendedName>
        <fullName evidence="1">Sulfate/thiosulfate import ATP-binding protein CysA</fullName>
        <ecNumber evidence="1">7.3.2.3</ecNumber>
    </recommendedName>
    <alternativeName>
        <fullName evidence="1">Sulfate-transporting ATPase</fullName>
    </alternativeName>
</protein>
<name>CYSA_ECOLI</name>
<sequence>MSIEIANIKKSFGRTQVLNDISLDIPSGQMVALLGPSGSGKTTLLRIIAGLEHQTSGHIRFHGTDVSRLHARDRKVGFVFQHYALFRHMTVFDNIAFGLTVLPRRERPNAAAIKAKVTKLLEMVQLAHLADRYPAQLSGGQKQRVALARALAVEPQILLLDEPFGALDAQVRKELRRWLRQLHEELKFTSVFVTHDQEEATEVADRVVVMSQGNIEQADAPDQVWREPATRFVLEFMGEVNRLQGTIRGGQFHVGAHRWPLGYTPAYQGPVDLFLRPWEVDISRRTSLDSPLPVQVLEASPKGHYTQLVVQPLGWYNEPLTVVMHGDDAPQRGERLFVGLQHARLYNGDERIETRDEELALAQSA</sequence>
<comment type="function">
    <text>Part of the ABC transporter complex CysAWTP involved in sulfate/thiosulfate import. Responsible for energy coupling to the transport system.</text>
</comment>
<comment type="catalytic activity">
    <reaction evidence="1">
        <text>sulfate(out) + ATP + H2O = sulfate(in) + ADP + phosphate + H(+)</text>
        <dbReference type="Rhea" id="RHEA:10192"/>
        <dbReference type="ChEBI" id="CHEBI:15377"/>
        <dbReference type="ChEBI" id="CHEBI:15378"/>
        <dbReference type="ChEBI" id="CHEBI:16189"/>
        <dbReference type="ChEBI" id="CHEBI:30616"/>
        <dbReference type="ChEBI" id="CHEBI:43474"/>
        <dbReference type="ChEBI" id="CHEBI:456216"/>
        <dbReference type="EC" id="7.3.2.3"/>
    </reaction>
</comment>
<comment type="catalytic activity">
    <reaction evidence="1">
        <text>thiosulfate(out) + ATP + H2O = thiosulfate(in) + ADP + phosphate + H(+)</text>
        <dbReference type="Rhea" id="RHEA:29871"/>
        <dbReference type="ChEBI" id="CHEBI:15377"/>
        <dbReference type="ChEBI" id="CHEBI:15378"/>
        <dbReference type="ChEBI" id="CHEBI:30616"/>
        <dbReference type="ChEBI" id="CHEBI:33542"/>
        <dbReference type="ChEBI" id="CHEBI:43474"/>
        <dbReference type="ChEBI" id="CHEBI:456216"/>
        <dbReference type="EC" id="7.3.2.3"/>
    </reaction>
</comment>
<comment type="subunit">
    <text evidence="1">The complex is composed of two ATP-binding proteins (CysA), two transmembrane proteins (CysT and CysW) and a solute-binding protein (CysP).</text>
</comment>
<comment type="interaction">
    <interactant intactId="EBI-556404">
        <id>P16676</id>
    </interactant>
    <interactant intactId="EBI-548584">
        <id>P07004</id>
        <label>proA</label>
    </interactant>
    <organismsDiffer>false</organismsDiffer>
    <experiments>3</experiments>
</comment>
<comment type="subcellular location">
    <subcellularLocation>
        <location evidence="1">Cell inner membrane</location>
        <topology evidence="1">Peripheral membrane protein</topology>
    </subcellularLocation>
</comment>
<comment type="miscellaneous">
    <text>CysPTWAM system can also transport molybdate.</text>
</comment>
<comment type="similarity">
    <text evidence="1">Belongs to the ABC transporter superfamily. Sulfate/tungstate importer (TC 3.A.1.6) family.</text>
</comment>